<reference key="1">
    <citation type="journal article" date="1992" name="Plant Mol. Biol.">
        <title>Nucleotide sequence of a cDNA clone that encodes the maize inhibitor of trypsin and activated Hageman factor.</title>
        <authorList>
            <person name="Wen L."/>
            <person name="Huang J.K."/>
            <person name="Zen K.C."/>
            <person name="Johnson B.H."/>
            <person name="Muthukrishnan S."/>
            <person name="Mackay V."/>
            <person name="Manney T.R."/>
            <person name="Manney M."/>
            <person name="Reeck G.R."/>
        </authorList>
    </citation>
    <scope>NUCLEOTIDE SEQUENCE [MRNA]</scope>
    <source>
        <strain>cv. A188</strain>
        <tissue>Endosperm</tissue>
    </source>
</reference>
<reference key="2">
    <citation type="journal article" date="1984" name="J. Biol. Chem.">
        <title>Amino acid sequence and secondary structural analysis of the corn inhibitor of trypsin and activated Hageman factor.</title>
        <authorList>
            <person name="Mahoney W.C."/>
            <person name="Hermodson M.A."/>
            <person name="Jones B."/>
            <person name="Powers D.D."/>
            <person name="Corfman R.S."/>
            <person name="Reeck G.R."/>
        </authorList>
    </citation>
    <scope>PROTEIN SEQUENCE OF 29-138</scope>
    <scope>ACTIVE SITE</scope>
    <source>
        <tissue>Seed</tissue>
    </source>
</reference>
<reference key="3">
    <citation type="journal article" date="1998" name="Biochemistry">
        <title>Structural determinants of the bifunctional corn Hageman factor inhibitor: X-ray crystal structure at 1.95-A resolution.</title>
        <authorList>
            <person name="Behnke C.A."/>
            <person name="Yee V.C."/>
            <person name="le Trong I."/>
            <person name="Pedersen L.C."/>
            <person name="Stenkamp R.E."/>
            <person name="Kim S.-S."/>
            <person name="Reeck G.R."/>
            <person name="Teller D.C."/>
        </authorList>
    </citation>
    <scope>X-RAY CRYSTALLOGRAPHY (1.95 ANGSTROMS) OF 33-148</scope>
    <scope>DISULFIDE BONDS</scope>
</reference>
<proteinExistence type="evidence at protein level"/>
<accession>P01088</accession>
<evidence type="ECO:0000269" key="1">
    <source>
    </source>
</evidence>
<evidence type="ECO:0000269" key="2">
    <source>
    </source>
</evidence>
<evidence type="ECO:0000305" key="3"/>
<evidence type="ECO:0007744" key="4">
    <source>
        <dbReference type="PDB" id="1BEA"/>
    </source>
</evidence>
<evidence type="ECO:0007829" key="5">
    <source>
        <dbReference type="PDB" id="1BEA"/>
    </source>
</evidence>
<sequence length="155" mass="16302">MASSSSSSHRRLILAAAVLLSVLAAASASAGTSCVPGWAIPHNPLPSCRWYVTSRTCGIGPRLPWPELKRRCCRELADIPAYCRCTALSILMDGAIPPGPDAQLEGRLEDLPGCPREVQRGFAATLVTEAECNLATISGVAECPWILGGGTMPSK</sequence>
<protein>
    <recommendedName>
        <fullName>Trypsin/factor XIIA inhibitor</fullName>
    </recommendedName>
    <alternativeName>
        <fullName>CHFI</fullName>
    </alternativeName>
    <alternativeName>
        <fullName>Hageman factor inhibitor</fullName>
    </alternativeName>
</protein>
<feature type="signal peptide" evidence="1">
    <location>
        <begin position="1"/>
        <end position="28"/>
    </location>
</feature>
<feature type="chain" id="PRO_0000014357" description="Trypsin/factor XIIA inhibitor">
    <location>
        <begin position="29"/>
        <end position="138"/>
    </location>
</feature>
<feature type="propeptide" id="PRO_0000014358" description="C-terminal peptide">
    <location>
        <begin position="139"/>
        <end position="155"/>
    </location>
</feature>
<feature type="active site" evidence="1">
    <location>
        <position position="62"/>
    </location>
</feature>
<feature type="disulfide bond" evidence="2 4">
    <location>
        <begin position="34"/>
        <end position="83"/>
    </location>
</feature>
<feature type="disulfide bond" evidence="2 4">
    <location>
        <begin position="48"/>
        <end position="72"/>
    </location>
</feature>
<feature type="disulfide bond" evidence="2 4">
    <location>
        <begin position="57"/>
        <end position="114"/>
    </location>
</feature>
<feature type="disulfide bond" evidence="2 4">
    <location>
        <begin position="73"/>
        <end position="132"/>
    </location>
</feature>
<feature type="disulfide bond" evidence="2 4">
    <location>
        <begin position="85"/>
        <end position="143"/>
    </location>
</feature>
<feature type="sequence variant">
    <original>E</original>
    <variation>A</variation>
    <location>
        <position position="117"/>
    </location>
</feature>
<feature type="sequence conflict" description="In Ref. 2; AA sequence." evidence="3" ref="2">
    <original>R</original>
    <variation>C</variation>
    <location>
        <position position="49"/>
    </location>
</feature>
<feature type="sequence conflict" description="In Ref. 2; AA sequence." evidence="3" ref="2">
    <original>T</original>
    <variation>R</variation>
    <location>
        <position position="56"/>
    </location>
</feature>
<feature type="sequence conflict" description="In Ref. 2; AA sequence." evidence="3" ref="2">
    <original>R</original>
    <variation>RPR</variation>
    <location>
        <position position="62"/>
    </location>
</feature>
<feature type="sequence conflict" description="In Ref. 2; AA sequence." evidence="3" ref="2">
    <original>R</original>
    <variation>A</variation>
    <location>
        <position position="107"/>
    </location>
</feature>
<feature type="sequence conflict" description="In Ref. 2; AA sequence." evidence="3" ref="2">
    <original>R</original>
    <variation>A</variation>
    <location>
        <position position="116"/>
    </location>
</feature>
<feature type="sequence conflict" description="In Ref. 2; AA sequence." evidence="3" ref="2">
    <original>R</original>
    <variation>Q</variation>
    <location>
        <position position="120"/>
    </location>
</feature>
<feature type="sequence conflict" description="In Ref. 2; AA sequence." evidence="3" ref="2">
    <original>A</original>
    <variation>E</variation>
    <location>
        <position position="135"/>
    </location>
</feature>
<feature type="turn" evidence="5">
    <location>
        <begin position="37"/>
        <end position="39"/>
    </location>
</feature>
<feature type="helix" evidence="5">
    <location>
        <begin position="46"/>
        <end position="55"/>
    </location>
</feature>
<feature type="helix" evidence="5">
    <location>
        <begin position="65"/>
        <end position="77"/>
    </location>
</feature>
<feature type="helix" evidence="5">
    <location>
        <begin position="81"/>
        <end position="83"/>
    </location>
</feature>
<feature type="helix" evidence="5">
    <location>
        <begin position="84"/>
        <end position="93"/>
    </location>
</feature>
<feature type="strand" evidence="5">
    <location>
        <begin position="99"/>
        <end position="101"/>
    </location>
</feature>
<feature type="helix" evidence="5">
    <location>
        <begin position="116"/>
        <end position="123"/>
    </location>
</feature>
<feature type="turn" evidence="5">
    <location>
        <begin position="124"/>
        <end position="127"/>
    </location>
</feature>
<feature type="turn" evidence="5">
    <location>
        <begin position="129"/>
        <end position="132"/>
    </location>
</feature>
<feature type="strand" evidence="5">
    <location>
        <begin position="139"/>
        <end position="141"/>
    </location>
</feature>
<comment type="function">
    <text>Potent inhibitor of mammalian trypsin and a specific inhibitor of factor XIIa (activated hageman factor).</text>
</comment>
<comment type="subunit">
    <text>Monomer.</text>
</comment>
<comment type="subcellular location">
    <subcellularLocation>
        <location>Secreted</location>
    </subcellularLocation>
</comment>
<comment type="miscellaneous">
    <text>The sequence heterogeneity suggests that 2 genes exist for this inhibitor. The genes may be alleles, or multiple loci could exist.</text>
</comment>
<comment type="similarity">
    <text evidence="3">Belongs to the protease inhibitor I6 (cereal trypsin/alpha-amylase inhibitor) family.</text>
</comment>
<name>ITRF_MAIZE</name>
<organism>
    <name type="scientific">Zea mays</name>
    <name type="common">Maize</name>
    <dbReference type="NCBI Taxonomy" id="4577"/>
    <lineage>
        <taxon>Eukaryota</taxon>
        <taxon>Viridiplantae</taxon>
        <taxon>Streptophyta</taxon>
        <taxon>Embryophyta</taxon>
        <taxon>Tracheophyta</taxon>
        <taxon>Spermatophyta</taxon>
        <taxon>Magnoliopsida</taxon>
        <taxon>Liliopsida</taxon>
        <taxon>Poales</taxon>
        <taxon>Poaceae</taxon>
        <taxon>PACMAD clade</taxon>
        <taxon>Panicoideae</taxon>
        <taxon>Andropogonodae</taxon>
        <taxon>Andropogoneae</taxon>
        <taxon>Tripsacinae</taxon>
        <taxon>Zea</taxon>
    </lineage>
</organism>
<dbReference type="EMBL" id="X54064">
    <property type="protein sequence ID" value="CAA37998.1"/>
    <property type="molecule type" value="mRNA"/>
</dbReference>
<dbReference type="PIR" id="S20850">
    <property type="entry name" value="TIZM1"/>
</dbReference>
<dbReference type="PDB" id="1BEA">
    <property type="method" value="X-ray"/>
    <property type="resolution" value="1.95 A"/>
    <property type="chains" value="A=29-155"/>
</dbReference>
<dbReference type="PDB" id="1BFA">
    <property type="method" value="X-ray"/>
    <property type="resolution" value="2.20 A"/>
    <property type="chains" value="A=28-154"/>
</dbReference>
<dbReference type="PDBsum" id="1BEA"/>
<dbReference type="PDBsum" id="1BFA"/>
<dbReference type="SMR" id="P01088"/>
<dbReference type="FunCoup" id="P01088">
    <property type="interactions" value="1111"/>
</dbReference>
<dbReference type="STRING" id="4577.P01088"/>
<dbReference type="MEROPS" id="I06.001"/>
<dbReference type="PaxDb" id="4577-GRMZM2G304548_P01"/>
<dbReference type="EnsemblPlants" id="Zm00001eb095210_T001">
    <property type="protein sequence ID" value="Zm00001eb095210_P001"/>
    <property type="gene ID" value="Zm00001eb095210"/>
</dbReference>
<dbReference type="Gramene" id="Zm00001eb095210_T001">
    <property type="protein sequence ID" value="Zm00001eb095210_P001"/>
    <property type="gene ID" value="Zm00001eb095210"/>
</dbReference>
<dbReference type="MaizeGDB" id="25928"/>
<dbReference type="eggNOG" id="ENOG502R3FY">
    <property type="taxonomic scope" value="Eukaryota"/>
</dbReference>
<dbReference type="InParanoid" id="P01088"/>
<dbReference type="OMA" id="PAYCRCT"/>
<dbReference type="EvolutionaryTrace" id="P01088"/>
<dbReference type="Proteomes" id="UP000007305">
    <property type="component" value="Chromosome 2"/>
</dbReference>
<dbReference type="ExpressionAtlas" id="P01088">
    <property type="expression patterns" value="baseline and differential"/>
</dbReference>
<dbReference type="GO" id="GO:0005576">
    <property type="term" value="C:extracellular region"/>
    <property type="evidence" value="ECO:0007669"/>
    <property type="project" value="UniProtKB-SubCell"/>
</dbReference>
<dbReference type="GO" id="GO:0004867">
    <property type="term" value="F:serine-type endopeptidase inhibitor activity"/>
    <property type="evidence" value="ECO:0007669"/>
    <property type="project" value="UniProtKB-KW"/>
</dbReference>
<dbReference type="CDD" id="cd00261">
    <property type="entry name" value="AAI_SS"/>
    <property type="match status" value="1"/>
</dbReference>
<dbReference type="Gene3D" id="1.10.110.10">
    <property type="entry name" value="Plant lipid-transfer and hydrophobic proteins"/>
    <property type="match status" value="1"/>
</dbReference>
<dbReference type="InterPro" id="IPR006106">
    <property type="entry name" value="Allergen/soft/tryp_amyl_inhib"/>
</dbReference>
<dbReference type="InterPro" id="IPR006105">
    <property type="entry name" value="Allergen/tryp_amyl_inhib_CS"/>
</dbReference>
<dbReference type="InterPro" id="IPR036312">
    <property type="entry name" value="Bifun_inhib/LTP/seed_sf"/>
</dbReference>
<dbReference type="InterPro" id="IPR016140">
    <property type="entry name" value="Bifunc_inhib/LTP/seed_store"/>
</dbReference>
<dbReference type="PANTHER" id="PTHR34481">
    <property type="entry name" value="TRYPSIN/FACTOR XIIA INHIBITOR-RELATED"/>
    <property type="match status" value="1"/>
</dbReference>
<dbReference type="PANTHER" id="PTHR34481:SF2">
    <property type="entry name" value="TRYPSIN_FACTOR XIIA INHIBITOR"/>
    <property type="match status" value="1"/>
</dbReference>
<dbReference type="Pfam" id="PF00234">
    <property type="entry name" value="Tryp_alpha_amyl"/>
    <property type="match status" value="1"/>
</dbReference>
<dbReference type="PRINTS" id="PR00808">
    <property type="entry name" value="AMLASEINHBTR"/>
</dbReference>
<dbReference type="SMART" id="SM00499">
    <property type="entry name" value="AAI"/>
    <property type="match status" value="1"/>
</dbReference>
<dbReference type="SUPFAM" id="SSF47699">
    <property type="entry name" value="Bifunctional inhibitor/lipid-transfer protein/seed storage 2S albumin"/>
    <property type="match status" value="1"/>
</dbReference>
<dbReference type="PROSITE" id="PS00426">
    <property type="entry name" value="CEREAL_TRYP_AMYL_INH"/>
    <property type="match status" value="1"/>
</dbReference>
<keyword id="KW-0002">3D-structure</keyword>
<keyword id="KW-0903">Direct protein sequencing</keyword>
<keyword id="KW-1015">Disulfide bond</keyword>
<keyword id="KW-0646">Protease inhibitor</keyword>
<keyword id="KW-1185">Reference proteome</keyword>
<keyword id="KW-0964">Secreted</keyword>
<keyword id="KW-0722">Serine protease inhibitor</keyword>
<keyword id="KW-0732">Signal</keyword>